<evidence type="ECO:0000255" key="1">
    <source>
        <dbReference type="HAMAP-Rule" id="MF_00182"/>
    </source>
</evidence>
<feature type="chain" id="PRO_1000020029" description="Methionyl-tRNA formyltransferase">
    <location>
        <begin position="1"/>
        <end position="306"/>
    </location>
</feature>
<feature type="binding site" evidence="1">
    <location>
        <begin position="110"/>
        <end position="113"/>
    </location>
    <ligand>
        <name>(6S)-5,6,7,8-tetrahydrofolate</name>
        <dbReference type="ChEBI" id="CHEBI:57453"/>
    </ligand>
</feature>
<protein>
    <recommendedName>
        <fullName evidence="1">Methionyl-tRNA formyltransferase</fullName>
        <ecNumber evidence="1">2.1.2.9</ecNumber>
    </recommendedName>
</protein>
<sequence length="306" mass="32770">MRVVFMGTPEFSVPILTAIIGHGYEVVAAYTQPPRPAGRRGLELTRSPVHEKAEQFGIPVFTPKSLKGAEEQDVFASLEADVAIVVAYGLLLPKAILDAPRLGCYNGHASLLPRWRGAAPIQRAIMAGDAETGMMIMKMDEGLDTGPVAMAEKVAITPDMTAGELHDRLSVIGADLMIRALGALERESLALQPQAEEGVTYAAKIDKAEARIDWSKPAKDVHNSIRGLSPFPGAWCEMEINGAVERVKLQRSTLGEGSGAPGTVLDDRLMIACGEGAVRLATLQRSGGKPLPAQEFLRGQRVTKVL</sequence>
<organism>
    <name type="scientific">Brucella ovis (strain ATCC 25840 / 63/290 / NCTC 10512)</name>
    <dbReference type="NCBI Taxonomy" id="444178"/>
    <lineage>
        <taxon>Bacteria</taxon>
        <taxon>Pseudomonadati</taxon>
        <taxon>Pseudomonadota</taxon>
        <taxon>Alphaproteobacteria</taxon>
        <taxon>Hyphomicrobiales</taxon>
        <taxon>Brucellaceae</taxon>
        <taxon>Brucella/Ochrobactrum group</taxon>
        <taxon>Brucella</taxon>
    </lineage>
</organism>
<accession>A5VVU0</accession>
<proteinExistence type="inferred from homology"/>
<name>FMT_BRUO2</name>
<reference key="1">
    <citation type="journal article" date="2009" name="PLoS ONE">
        <title>Genome degradation in Brucella ovis corresponds with narrowing of its host range and tissue tropism.</title>
        <authorList>
            <person name="Tsolis R.M."/>
            <person name="Seshadri R."/>
            <person name="Santos R.L."/>
            <person name="Sangari F.J."/>
            <person name="Lobo J.M."/>
            <person name="de Jong M.F."/>
            <person name="Ren Q."/>
            <person name="Myers G."/>
            <person name="Brinkac L.M."/>
            <person name="Nelson W.C."/>
            <person name="Deboy R.T."/>
            <person name="Angiuoli S."/>
            <person name="Khouri H."/>
            <person name="Dimitrov G."/>
            <person name="Robinson J.R."/>
            <person name="Mulligan S."/>
            <person name="Walker R.L."/>
            <person name="Elzer P.E."/>
            <person name="Hassan K.A."/>
            <person name="Paulsen I.T."/>
        </authorList>
    </citation>
    <scope>NUCLEOTIDE SEQUENCE [LARGE SCALE GENOMIC DNA]</scope>
    <source>
        <strain>ATCC 25840 / 63/290 / NCTC 10512</strain>
    </source>
</reference>
<dbReference type="EC" id="2.1.2.9" evidence="1"/>
<dbReference type="EMBL" id="CP000709">
    <property type="protein sequence ID" value="ABQ62403.1"/>
    <property type="molecule type" value="Genomic_DNA"/>
</dbReference>
<dbReference type="RefSeq" id="WP_006016640.1">
    <property type="nucleotide sequence ID" value="NC_009504.1"/>
</dbReference>
<dbReference type="SMR" id="A5VVU0"/>
<dbReference type="GeneID" id="45126335"/>
<dbReference type="KEGG" id="bov:BOV_A0975"/>
<dbReference type="HOGENOM" id="CLU_033347_1_2_5"/>
<dbReference type="PhylomeDB" id="A5VVU0"/>
<dbReference type="Proteomes" id="UP000006383">
    <property type="component" value="Chromosome II"/>
</dbReference>
<dbReference type="GO" id="GO:0005829">
    <property type="term" value="C:cytosol"/>
    <property type="evidence" value="ECO:0007669"/>
    <property type="project" value="TreeGrafter"/>
</dbReference>
<dbReference type="GO" id="GO:0004479">
    <property type="term" value="F:methionyl-tRNA formyltransferase activity"/>
    <property type="evidence" value="ECO:0007669"/>
    <property type="project" value="UniProtKB-UniRule"/>
</dbReference>
<dbReference type="CDD" id="cd08646">
    <property type="entry name" value="FMT_core_Met-tRNA-FMT_N"/>
    <property type="match status" value="1"/>
</dbReference>
<dbReference type="CDD" id="cd08704">
    <property type="entry name" value="Met_tRNA_FMT_C"/>
    <property type="match status" value="1"/>
</dbReference>
<dbReference type="Gene3D" id="3.10.25.10">
    <property type="entry name" value="Formyl transferase, C-terminal domain"/>
    <property type="match status" value="1"/>
</dbReference>
<dbReference type="Gene3D" id="3.40.50.170">
    <property type="entry name" value="Formyl transferase, N-terminal domain"/>
    <property type="match status" value="1"/>
</dbReference>
<dbReference type="HAMAP" id="MF_00182">
    <property type="entry name" value="Formyl_trans"/>
    <property type="match status" value="1"/>
</dbReference>
<dbReference type="InterPro" id="IPR005794">
    <property type="entry name" value="Fmt"/>
</dbReference>
<dbReference type="InterPro" id="IPR005793">
    <property type="entry name" value="Formyl_trans_C"/>
</dbReference>
<dbReference type="InterPro" id="IPR037022">
    <property type="entry name" value="Formyl_trans_C_sf"/>
</dbReference>
<dbReference type="InterPro" id="IPR002376">
    <property type="entry name" value="Formyl_transf_N"/>
</dbReference>
<dbReference type="InterPro" id="IPR036477">
    <property type="entry name" value="Formyl_transf_N_sf"/>
</dbReference>
<dbReference type="InterPro" id="IPR011034">
    <property type="entry name" value="Formyl_transferase-like_C_sf"/>
</dbReference>
<dbReference type="InterPro" id="IPR001555">
    <property type="entry name" value="GART_AS"/>
</dbReference>
<dbReference type="InterPro" id="IPR044135">
    <property type="entry name" value="Met-tRNA-FMT_C"/>
</dbReference>
<dbReference type="InterPro" id="IPR041711">
    <property type="entry name" value="Met-tRNA-FMT_N"/>
</dbReference>
<dbReference type="NCBIfam" id="TIGR00460">
    <property type="entry name" value="fmt"/>
    <property type="match status" value="1"/>
</dbReference>
<dbReference type="PANTHER" id="PTHR11138">
    <property type="entry name" value="METHIONYL-TRNA FORMYLTRANSFERASE"/>
    <property type="match status" value="1"/>
</dbReference>
<dbReference type="PANTHER" id="PTHR11138:SF5">
    <property type="entry name" value="METHIONYL-TRNA FORMYLTRANSFERASE, MITOCHONDRIAL"/>
    <property type="match status" value="1"/>
</dbReference>
<dbReference type="Pfam" id="PF02911">
    <property type="entry name" value="Formyl_trans_C"/>
    <property type="match status" value="1"/>
</dbReference>
<dbReference type="Pfam" id="PF00551">
    <property type="entry name" value="Formyl_trans_N"/>
    <property type="match status" value="1"/>
</dbReference>
<dbReference type="SUPFAM" id="SSF50486">
    <property type="entry name" value="FMT C-terminal domain-like"/>
    <property type="match status" value="1"/>
</dbReference>
<dbReference type="SUPFAM" id="SSF53328">
    <property type="entry name" value="Formyltransferase"/>
    <property type="match status" value="1"/>
</dbReference>
<dbReference type="PROSITE" id="PS00373">
    <property type="entry name" value="GART"/>
    <property type="match status" value="1"/>
</dbReference>
<comment type="function">
    <text evidence="1">Attaches a formyl group to the free amino group of methionyl-tRNA(fMet). The formyl group appears to play a dual role in the initiator identity of N-formylmethionyl-tRNA by promoting its recognition by IF2 and preventing the misappropriation of this tRNA by the elongation apparatus.</text>
</comment>
<comment type="catalytic activity">
    <reaction evidence="1">
        <text>L-methionyl-tRNA(fMet) + (6R)-10-formyltetrahydrofolate = N-formyl-L-methionyl-tRNA(fMet) + (6S)-5,6,7,8-tetrahydrofolate + H(+)</text>
        <dbReference type="Rhea" id="RHEA:24380"/>
        <dbReference type="Rhea" id="RHEA-COMP:9952"/>
        <dbReference type="Rhea" id="RHEA-COMP:9953"/>
        <dbReference type="ChEBI" id="CHEBI:15378"/>
        <dbReference type="ChEBI" id="CHEBI:57453"/>
        <dbReference type="ChEBI" id="CHEBI:78530"/>
        <dbReference type="ChEBI" id="CHEBI:78844"/>
        <dbReference type="ChEBI" id="CHEBI:195366"/>
        <dbReference type="EC" id="2.1.2.9"/>
    </reaction>
</comment>
<comment type="similarity">
    <text evidence="1">Belongs to the Fmt family.</text>
</comment>
<gene>
    <name evidence="1" type="primary">fmt</name>
    <name type="ordered locus">BOV_A0975</name>
</gene>
<keyword id="KW-0648">Protein biosynthesis</keyword>
<keyword id="KW-0808">Transferase</keyword>